<name>NU1C_MESVI</name>
<geneLocation type="chloroplast"/>
<evidence type="ECO:0000255" key="1">
    <source>
        <dbReference type="HAMAP-Rule" id="MF_01350"/>
    </source>
</evidence>
<feature type="chain" id="PRO_0000117511" description="NAD(P)H-quinone oxidoreductase subunit 1, chloroplastic">
    <location>
        <begin position="1"/>
        <end position="367"/>
    </location>
</feature>
<feature type="transmembrane region" description="Helical" evidence="1">
    <location>
        <begin position="29"/>
        <end position="49"/>
    </location>
</feature>
<feature type="transmembrane region" description="Helical" evidence="1">
    <location>
        <begin position="96"/>
        <end position="116"/>
    </location>
</feature>
<feature type="transmembrane region" description="Helical" evidence="1">
    <location>
        <begin position="128"/>
        <end position="148"/>
    </location>
</feature>
<feature type="transmembrane region" description="Helical" evidence="1">
    <location>
        <begin position="176"/>
        <end position="196"/>
    </location>
</feature>
<feature type="transmembrane region" description="Helical" evidence="1">
    <location>
        <begin position="204"/>
        <end position="224"/>
    </location>
</feature>
<feature type="transmembrane region" description="Helical" evidence="1">
    <location>
        <begin position="266"/>
        <end position="286"/>
    </location>
</feature>
<feature type="transmembrane region" description="Helical" evidence="1">
    <location>
        <begin position="304"/>
        <end position="324"/>
    </location>
</feature>
<feature type="transmembrane region" description="Helical" evidence="1">
    <location>
        <begin position="347"/>
        <end position="367"/>
    </location>
</feature>
<gene>
    <name evidence="1" type="primary">ndhA</name>
</gene>
<dbReference type="EC" id="7.1.1.-" evidence="1"/>
<dbReference type="EMBL" id="AF166114">
    <property type="protein sequence ID" value="AAF43887.1"/>
    <property type="molecule type" value="Genomic_DNA"/>
</dbReference>
<dbReference type="RefSeq" id="NP_038449.1">
    <property type="nucleotide sequence ID" value="NC_002186.1"/>
</dbReference>
<dbReference type="SMR" id="Q9MUL1"/>
<dbReference type="GeneID" id="800902"/>
<dbReference type="GO" id="GO:0009535">
    <property type="term" value="C:chloroplast thylakoid membrane"/>
    <property type="evidence" value="ECO:0007669"/>
    <property type="project" value="UniProtKB-SubCell"/>
</dbReference>
<dbReference type="GO" id="GO:0003954">
    <property type="term" value="F:NADH dehydrogenase activity"/>
    <property type="evidence" value="ECO:0007669"/>
    <property type="project" value="TreeGrafter"/>
</dbReference>
<dbReference type="GO" id="GO:0016655">
    <property type="term" value="F:oxidoreductase activity, acting on NAD(P)H, quinone or similar compound as acceptor"/>
    <property type="evidence" value="ECO:0007669"/>
    <property type="project" value="UniProtKB-UniRule"/>
</dbReference>
<dbReference type="GO" id="GO:0048038">
    <property type="term" value="F:quinone binding"/>
    <property type="evidence" value="ECO:0007669"/>
    <property type="project" value="UniProtKB-KW"/>
</dbReference>
<dbReference type="GO" id="GO:0009060">
    <property type="term" value="P:aerobic respiration"/>
    <property type="evidence" value="ECO:0007669"/>
    <property type="project" value="TreeGrafter"/>
</dbReference>
<dbReference type="GO" id="GO:0019684">
    <property type="term" value="P:photosynthesis, light reaction"/>
    <property type="evidence" value="ECO:0007669"/>
    <property type="project" value="UniProtKB-UniRule"/>
</dbReference>
<dbReference type="HAMAP" id="MF_01350">
    <property type="entry name" value="NDH1_NuoH"/>
    <property type="match status" value="1"/>
</dbReference>
<dbReference type="InterPro" id="IPR001694">
    <property type="entry name" value="NADH_UbQ_OxRdtase_su1/FPO"/>
</dbReference>
<dbReference type="InterPro" id="IPR018086">
    <property type="entry name" value="NADH_UbQ_OxRdtase_su1_CS"/>
</dbReference>
<dbReference type="NCBIfam" id="NF004741">
    <property type="entry name" value="PRK06076.1-2"/>
    <property type="match status" value="1"/>
</dbReference>
<dbReference type="NCBIfam" id="NF004744">
    <property type="entry name" value="PRK06076.1-5"/>
    <property type="match status" value="1"/>
</dbReference>
<dbReference type="PANTHER" id="PTHR11432">
    <property type="entry name" value="NADH DEHYDROGENASE SUBUNIT 1"/>
    <property type="match status" value="1"/>
</dbReference>
<dbReference type="PANTHER" id="PTHR11432:SF3">
    <property type="entry name" value="NADH-UBIQUINONE OXIDOREDUCTASE CHAIN 1"/>
    <property type="match status" value="1"/>
</dbReference>
<dbReference type="Pfam" id="PF00146">
    <property type="entry name" value="NADHdh"/>
    <property type="match status" value="1"/>
</dbReference>
<dbReference type="PROSITE" id="PS00667">
    <property type="entry name" value="COMPLEX1_ND1_1"/>
    <property type="match status" value="1"/>
</dbReference>
<dbReference type="PROSITE" id="PS00668">
    <property type="entry name" value="COMPLEX1_ND1_2"/>
    <property type="match status" value="1"/>
</dbReference>
<keyword id="KW-0150">Chloroplast</keyword>
<keyword id="KW-0472">Membrane</keyword>
<keyword id="KW-0520">NAD</keyword>
<keyword id="KW-0521">NADP</keyword>
<keyword id="KW-0934">Plastid</keyword>
<keyword id="KW-0618">Plastoquinone</keyword>
<keyword id="KW-0874">Quinone</keyword>
<keyword id="KW-0793">Thylakoid</keyword>
<keyword id="KW-1278">Translocase</keyword>
<keyword id="KW-0812">Transmembrane</keyword>
<keyword id="KW-1133">Transmembrane helix</keyword>
<organism>
    <name type="scientific">Mesostigma viride</name>
    <name type="common">Green alga</name>
    <dbReference type="NCBI Taxonomy" id="41882"/>
    <lineage>
        <taxon>Eukaryota</taxon>
        <taxon>Viridiplantae</taxon>
        <taxon>Streptophyta</taxon>
        <taxon>Mesostigmatophyceae</taxon>
        <taxon>Mesostigmatales</taxon>
        <taxon>Mesostigmataceae</taxon>
        <taxon>Mesostigma</taxon>
    </lineage>
</organism>
<proteinExistence type="inferred from homology"/>
<sequence length="367" mass="40369">MLLTINLKDSFLTFFSNLGFSNEFSKALWIPLPILLLIILAVVGVLVVVWLERKISAAVQQRIGPEYAGPLGVLQPLADGLKLAFKEDIIPSKGDVLLFTLGPAIVVIPIFLSYLIVPFGENLIVSNINLGIFFWITVSSVAPLGLLMSGYGSNNKYSFLGGLRATAQSLSYEIPLALCVLSICLLSDSLSTIDIVQKQSTYGILGWNIWRQPIGFIAFIIAALAECERLPFDLPEAEEELVAGYQTEYTGMKFGLFYIGSYVNLLVSALFASVLYLGGWSLPIPIEFLLNKMSLNASDSEVQVISAFLGIGMTLLKTYLFLFLSILTRWTMPRVRIDQLLDLGWKFLLPISLGNLLLTASLKIALL</sequence>
<accession>Q9MUL1</accession>
<reference key="1">
    <citation type="journal article" date="2000" name="Nature">
        <title>Ancestral chloroplast genome in Mesostigma viride reveals an early branch of green plant evolution.</title>
        <authorList>
            <person name="Lemieux C."/>
            <person name="Otis C."/>
            <person name="Turmel M."/>
        </authorList>
    </citation>
    <scope>NUCLEOTIDE SEQUENCE [LARGE SCALE GENOMIC DNA]</scope>
    <source>
        <strain>NIES-296 / KY-14 / CCMP 2046</strain>
    </source>
</reference>
<comment type="function">
    <text evidence="1">NDH shuttles electrons from NAD(P)H:plastoquinone, via FMN and iron-sulfur (Fe-S) centers, to quinones in the photosynthetic chain and possibly in a chloroplast respiratory chain. The immediate electron acceptor for the enzyme in this species is believed to be plastoquinone. Couples the redox reaction to proton translocation, and thus conserves the redox energy in a proton gradient.</text>
</comment>
<comment type="catalytic activity">
    <reaction evidence="1">
        <text>a plastoquinone + NADH + (n+1) H(+)(in) = a plastoquinol + NAD(+) + n H(+)(out)</text>
        <dbReference type="Rhea" id="RHEA:42608"/>
        <dbReference type="Rhea" id="RHEA-COMP:9561"/>
        <dbReference type="Rhea" id="RHEA-COMP:9562"/>
        <dbReference type="ChEBI" id="CHEBI:15378"/>
        <dbReference type="ChEBI" id="CHEBI:17757"/>
        <dbReference type="ChEBI" id="CHEBI:57540"/>
        <dbReference type="ChEBI" id="CHEBI:57945"/>
        <dbReference type="ChEBI" id="CHEBI:62192"/>
    </reaction>
</comment>
<comment type="catalytic activity">
    <reaction evidence="1">
        <text>a plastoquinone + NADPH + (n+1) H(+)(in) = a plastoquinol + NADP(+) + n H(+)(out)</text>
        <dbReference type="Rhea" id="RHEA:42612"/>
        <dbReference type="Rhea" id="RHEA-COMP:9561"/>
        <dbReference type="Rhea" id="RHEA-COMP:9562"/>
        <dbReference type="ChEBI" id="CHEBI:15378"/>
        <dbReference type="ChEBI" id="CHEBI:17757"/>
        <dbReference type="ChEBI" id="CHEBI:57783"/>
        <dbReference type="ChEBI" id="CHEBI:58349"/>
        <dbReference type="ChEBI" id="CHEBI:62192"/>
    </reaction>
</comment>
<comment type="subunit">
    <text evidence="1">NDH is composed of at least 16 different subunits, 5 of which are encoded in the nucleus.</text>
</comment>
<comment type="subcellular location">
    <subcellularLocation>
        <location evidence="1">Plastid</location>
        <location evidence="1">Chloroplast thylakoid membrane</location>
        <topology evidence="1">Multi-pass membrane protein</topology>
    </subcellularLocation>
</comment>
<comment type="similarity">
    <text evidence="1">Belongs to the complex I subunit 1 family.</text>
</comment>
<protein>
    <recommendedName>
        <fullName evidence="1">NAD(P)H-quinone oxidoreductase subunit 1, chloroplastic</fullName>
        <ecNumber evidence="1">7.1.1.-</ecNumber>
    </recommendedName>
    <alternativeName>
        <fullName evidence="1">NAD(P)H dehydrogenase subunit 1</fullName>
        <shortName evidence="1">NDH subunit 1</shortName>
    </alternativeName>
    <alternativeName>
        <fullName evidence="1">NADH-plastoquinone oxidoreductase subunit 1</fullName>
    </alternativeName>
</protein>